<dbReference type="EMBL" id="AE016879">
    <property type="protein sequence ID" value="AAP26173.1"/>
    <property type="molecule type" value="Genomic_DNA"/>
</dbReference>
<dbReference type="EMBL" id="AE017334">
    <property type="protein sequence ID" value="AAT31425.1"/>
    <property type="molecule type" value="Genomic_DNA"/>
</dbReference>
<dbReference type="EMBL" id="AE017225">
    <property type="protein sequence ID" value="AAT54459.1"/>
    <property type="molecule type" value="Genomic_DNA"/>
</dbReference>
<dbReference type="RefSeq" id="NP_844687.1">
    <property type="nucleotide sequence ID" value="NC_003997.3"/>
</dbReference>
<dbReference type="RefSeq" id="WP_000750724.1">
    <property type="nucleotide sequence ID" value="NZ_WXXJ01000017.1"/>
</dbReference>
<dbReference type="RefSeq" id="YP_028408.1">
    <property type="nucleotide sequence ID" value="NC_005945.1"/>
</dbReference>
<dbReference type="SMR" id="Q81QW3"/>
<dbReference type="STRING" id="261594.GBAA_2302"/>
<dbReference type="DNASU" id="1085944"/>
<dbReference type="KEGG" id="ban:BA_2302"/>
<dbReference type="KEGG" id="bar:GBAA_2302"/>
<dbReference type="KEGG" id="bat:BAS2147"/>
<dbReference type="PATRIC" id="fig|198094.11.peg.2272"/>
<dbReference type="eggNOG" id="COG4479">
    <property type="taxonomic scope" value="Bacteria"/>
</dbReference>
<dbReference type="HOGENOM" id="CLU_177534_0_0_9"/>
<dbReference type="OMA" id="WLMTNRN"/>
<dbReference type="OrthoDB" id="2242851at2"/>
<dbReference type="Proteomes" id="UP000000427">
    <property type="component" value="Chromosome"/>
</dbReference>
<dbReference type="Proteomes" id="UP000000594">
    <property type="component" value="Chromosome"/>
</dbReference>
<dbReference type="Gene3D" id="1.10.150.260">
    <property type="entry name" value="YozE SAM-like"/>
    <property type="match status" value="1"/>
</dbReference>
<dbReference type="HAMAP" id="MF_01538">
    <property type="entry name" value="UPF0346"/>
    <property type="match status" value="1"/>
</dbReference>
<dbReference type="InterPro" id="IPR010673">
    <property type="entry name" value="UPF0346"/>
</dbReference>
<dbReference type="InterPro" id="IPR023089">
    <property type="entry name" value="YozE_SAM-like"/>
</dbReference>
<dbReference type="InterPro" id="IPR036806">
    <property type="entry name" value="YozE_SAM-like_sf"/>
</dbReference>
<dbReference type="NCBIfam" id="NF010193">
    <property type="entry name" value="PRK13672.1"/>
    <property type="match status" value="1"/>
</dbReference>
<dbReference type="Pfam" id="PF06855">
    <property type="entry name" value="YozE_SAM_like"/>
    <property type="match status" value="1"/>
</dbReference>
<dbReference type="PIRSF" id="PIRSF037262">
    <property type="entry name" value="UCP037262"/>
    <property type="match status" value="1"/>
</dbReference>
<dbReference type="SUPFAM" id="SSF140652">
    <property type="entry name" value="YozE-like"/>
    <property type="match status" value="1"/>
</dbReference>
<gene>
    <name type="ordered locus">BA_2302</name>
    <name type="ordered locus">GBAA_2302</name>
    <name type="ordered locus">BAS2147</name>
</gene>
<reference key="1">
    <citation type="journal article" date="2003" name="Nature">
        <title>The genome sequence of Bacillus anthracis Ames and comparison to closely related bacteria.</title>
        <authorList>
            <person name="Read T.D."/>
            <person name="Peterson S.N."/>
            <person name="Tourasse N.J."/>
            <person name="Baillie L.W."/>
            <person name="Paulsen I.T."/>
            <person name="Nelson K.E."/>
            <person name="Tettelin H."/>
            <person name="Fouts D.E."/>
            <person name="Eisen J.A."/>
            <person name="Gill S.R."/>
            <person name="Holtzapple E.K."/>
            <person name="Okstad O.A."/>
            <person name="Helgason E."/>
            <person name="Rilstone J."/>
            <person name="Wu M."/>
            <person name="Kolonay J.F."/>
            <person name="Beanan M.J."/>
            <person name="Dodson R.J."/>
            <person name="Brinkac L.M."/>
            <person name="Gwinn M.L."/>
            <person name="DeBoy R.T."/>
            <person name="Madpu R."/>
            <person name="Daugherty S.C."/>
            <person name="Durkin A.S."/>
            <person name="Haft D.H."/>
            <person name="Nelson W.C."/>
            <person name="Peterson J.D."/>
            <person name="Pop M."/>
            <person name="Khouri H.M."/>
            <person name="Radune D."/>
            <person name="Benton J.L."/>
            <person name="Mahamoud Y."/>
            <person name="Jiang L."/>
            <person name="Hance I.R."/>
            <person name="Weidman J.F."/>
            <person name="Berry K.J."/>
            <person name="Plaut R.D."/>
            <person name="Wolf A.M."/>
            <person name="Watkins K.L."/>
            <person name="Nierman W.C."/>
            <person name="Hazen A."/>
            <person name="Cline R.T."/>
            <person name="Redmond C."/>
            <person name="Thwaite J.E."/>
            <person name="White O."/>
            <person name="Salzberg S.L."/>
            <person name="Thomason B."/>
            <person name="Friedlander A.M."/>
            <person name="Koehler T.M."/>
            <person name="Hanna P.C."/>
            <person name="Kolstoe A.-B."/>
            <person name="Fraser C.M."/>
        </authorList>
    </citation>
    <scope>NUCLEOTIDE SEQUENCE [LARGE SCALE GENOMIC DNA]</scope>
    <source>
        <strain>Ames / isolate Porton</strain>
    </source>
</reference>
<reference key="2">
    <citation type="journal article" date="2009" name="J. Bacteriol.">
        <title>The complete genome sequence of Bacillus anthracis Ames 'Ancestor'.</title>
        <authorList>
            <person name="Ravel J."/>
            <person name="Jiang L."/>
            <person name="Stanley S.T."/>
            <person name="Wilson M.R."/>
            <person name="Decker R.S."/>
            <person name="Read T.D."/>
            <person name="Worsham P."/>
            <person name="Keim P.S."/>
            <person name="Salzberg S.L."/>
            <person name="Fraser-Liggett C.M."/>
            <person name="Rasko D.A."/>
        </authorList>
    </citation>
    <scope>NUCLEOTIDE SEQUENCE [LARGE SCALE GENOMIC DNA]</scope>
    <source>
        <strain>Ames ancestor</strain>
    </source>
</reference>
<reference key="3">
    <citation type="submission" date="2004-01" db="EMBL/GenBank/DDBJ databases">
        <title>Complete genome sequence of Bacillus anthracis Sterne.</title>
        <authorList>
            <person name="Brettin T.S."/>
            <person name="Bruce D."/>
            <person name="Challacombe J.F."/>
            <person name="Gilna P."/>
            <person name="Han C."/>
            <person name="Hill K."/>
            <person name="Hitchcock P."/>
            <person name="Jackson P."/>
            <person name="Keim P."/>
            <person name="Longmire J."/>
            <person name="Lucas S."/>
            <person name="Okinaka R."/>
            <person name="Richardson P."/>
            <person name="Rubin E."/>
            <person name="Tice H."/>
        </authorList>
    </citation>
    <scope>NUCLEOTIDE SEQUENCE [LARGE SCALE GENOMIC DNA]</scope>
    <source>
        <strain>Sterne</strain>
    </source>
</reference>
<evidence type="ECO:0000255" key="1">
    <source>
        <dbReference type="HAMAP-Rule" id="MF_01538"/>
    </source>
</evidence>
<accession>Q81QW3</accession>
<accession>Q6HZ30</accession>
<accession>Q6KT29</accession>
<protein>
    <recommendedName>
        <fullName evidence="1">UPF0346 protein BA_2302/GBAA_2302/BAS2147</fullName>
    </recommendedName>
</protein>
<name>Y2302_BACAN</name>
<feature type="chain" id="PRO_0000164264" description="UPF0346 protein BA_2302/GBAA_2302/BAS2147">
    <location>
        <begin position="1"/>
        <end position="71"/>
    </location>
</feature>
<comment type="similarity">
    <text evidence="1">Belongs to the UPF0346 family.</text>
</comment>
<proteinExistence type="inferred from homology"/>
<organism>
    <name type="scientific">Bacillus anthracis</name>
    <dbReference type="NCBI Taxonomy" id="1392"/>
    <lineage>
        <taxon>Bacteria</taxon>
        <taxon>Bacillati</taxon>
        <taxon>Bacillota</taxon>
        <taxon>Bacilli</taxon>
        <taxon>Bacillales</taxon>
        <taxon>Bacillaceae</taxon>
        <taxon>Bacillus</taxon>
        <taxon>Bacillus cereus group</taxon>
    </lineage>
</organism>
<keyword id="KW-1185">Reference proteome</keyword>
<sequence length="71" mass="8492">MKKTFYHYMMKHRAALFSNEISNLAEAMYDDLSFPKQSEDYDEISSYLELSGMLESMSIFDEAWDLYIQDR</sequence>